<dbReference type="EC" id="3.2.1.4"/>
<dbReference type="EMBL" id="AP005682">
    <property type="protein sequence ID" value="BAD33772.1"/>
    <property type="molecule type" value="Genomic_DNA"/>
</dbReference>
<dbReference type="EMBL" id="AP008215">
    <property type="protein sequence ID" value="BAF25661.1"/>
    <property type="molecule type" value="Genomic_DNA"/>
</dbReference>
<dbReference type="EMBL" id="AP014965">
    <property type="protein sequence ID" value="BAT09088.1"/>
    <property type="molecule type" value="Genomic_DNA"/>
</dbReference>
<dbReference type="EMBL" id="AK106815">
    <property type="protein sequence ID" value="BAG97842.1"/>
    <property type="molecule type" value="mRNA"/>
</dbReference>
<dbReference type="RefSeq" id="XP_015651341.1">
    <property type="nucleotide sequence ID" value="XM_015795855.1"/>
</dbReference>
<dbReference type="SMR" id="Q69NF5"/>
<dbReference type="FunCoup" id="Q69NF5">
    <property type="interactions" value="152"/>
</dbReference>
<dbReference type="STRING" id="39947.Q69NF5"/>
<dbReference type="CAZy" id="GH9">
    <property type="family name" value="Glycoside Hydrolase Family 9"/>
</dbReference>
<dbReference type="GlyCosmos" id="Q69NF5">
    <property type="glycosylation" value="4 sites, No reported glycans"/>
</dbReference>
<dbReference type="PaxDb" id="39947-Q69NF5"/>
<dbReference type="EnsemblPlants" id="Os09t0530200-01">
    <property type="protein sequence ID" value="Os09t0530200-01"/>
    <property type="gene ID" value="Os09g0530200"/>
</dbReference>
<dbReference type="Gramene" id="Os09t0530200-01">
    <property type="protein sequence ID" value="Os09t0530200-01"/>
    <property type="gene ID" value="Os09g0530200"/>
</dbReference>
<dbReference type="KEGG" id="dosa:Os09g0530200"/>
<dbReference type="eggNOG" id="ENOG502QV58">
    <property type="taxonomic scope" value="Eukaryota"/>
</dbReference>
<dbReference type="HOGENOM" id="CLU_008926_1_2_1"/>
<dbReference type="InParanoid" id="Q69NF5"/>
<dbReference type="OMA" id="TINCGNI"/>
<dbReference type="OrthoDB" id="10257085at2759"/>
<dbReference type="Proteomes" id="UP000000763">
    <property type="component" value="Chromosome 9"/>
</dbReference>
<dbReference type="Proteomes" id="UP000059680">
    <property type="component" value="Chromosome 9"/>
</dbReference>
<dbReference type="GO" id="GO:0005576">
    <property type="term" value="C:extracellular region"/>
    <property type="evidence" value="ECO:0007669"/>
    <property type="project" value="UniProtKB-SubCell"/>
</dbReference>
<dbReference type="GO" id="GO:0008810">
    <property type="term" value="F:cellulase activity"/>
    <property type="evidence" value="ECO:0007669"/>
    <property type="project" value="UniProtKB-EC"/>
</dbReference>
<dbReference type="GO" id="GO:0071555">
    <property type="term" value="P:cell wall organization"/>
    <property type="evidence" value="ECO:0007669"/>
    <property type="project" value="UniProtKB-KW"/>
</dbReference>
<dbReference type="GO" id="GO:0030245">
    <property type="term" value="P:cellulose catabolic process"/>
    <property type="evidence" value="ECO:0007669"/>
    <property type="project" value="UniProtKB-KW"/>
</dbReference>
<dbReference type="FunFam" id="1.50.10.10:FF:000020">
    <property type="entry name" value="Endoglucanase"/>
    <property type="match status" value="1"/>
</dbReference>
<dbReference type="Gene3D" id="1.50.10.10">
    <property type="match status" value="1"/>
</dbReference>
<dbReference type="InterPro" id="IPR008928">
    <property type="entry name" value="6-hairpin_glycosidase_sf"/>
</dbReference>
<dbReference type="InterPro" id="IPR012341">
    <property type="entry name" value="6hp_glycosidase-like_sf"/>
</dbReference>
<dbReference type="InterPro" id="IPR001701">
    <property type="entry name" value="Glyco_hydro_9"/>
</dbReference>
<dbReference type="InterPro" id="IPR033126">
    <property type="entry name" value="Glyco_hydro_9_Asp/Glu_AS"/>
</dbReference>
<dbReference type="InterPro" id="IPR018221">
    <property type="entry name" value="Glyco_hydro_9_His_AS"/>
</dbReference>
<dbReference type="PANTHER" id="PTHR22298">
    <property type="entry name" value="ENDO-1,4-BETA-GLUCANASE"/>
    <property type="match status" value="1"/>
</dbReference>
<dbReference type="Pfam" id="PF00759">
    <property type="entry name" value="Glyco_hydro_9"/>
    <property type="match status" value="1"/>
</dbReference>
<dbReference type="SUPFAM" id="SSF48208">
    <property type="entry name" value="Six-hairpin glycosidases"/>
    <property type="match status" value="1"/>
</dbReference>
<dbReference type="PROSITE" id="PS60032">
    <property type="entry name" value="GH9_1"/>
    <property type="match status" value="1"/>
</dbReference>
<dbReference type="PROSITE" id="PS00592">
    <property type="entry name" value="GH9_2"/>
    <property type="match status" value="1"/>
</dbReference>
<dbReference type="PROSITE" id="PS00698">
    <property type="entry name" value="GH9_3"/>
    <property type="match status" value="1"/>
</dbReference>
<sequence length="515" mass="55453">MALLSAPVRRRRSRVRVLLVCCCLLLALAAPSAAAAAAGHDYGDALAKSILFFEGQRSGRLPAAGQRAAWRGDSAVSDGGAAGVDLEGGYYDAGDNVKFGFPMAFTATMLAWGVVEFGDAMPPAERAHAADAVRWATDYLLKTISHPGVIFIQVGDPTKDHGCWERPEDMDTARTVYNISAARPGSDVAGETAAALAAASMVFRDDDPAYAARLLAGARSAFEFADEHKGAYSDDPELRAGGCPFYCDFDGYQDELLWGAAWLRRASKEGTYLDYIQNNGKTLGAEDSTNEFGWDNKHAGINVLVSKEFIDGEVLSLQSYKEFADGFICTLIPESSSPHITYTPGGMIYKPGGSNMQHVTSISFLLLTYAKYLSNSSRTVNCGNVSVGPATLQQLARKQADYILGDNPMKMSYMVGYGDRYPQRIHHRGSSLPSIKSHPQRIACNDGTPYYNSSSPNPNPLIGAVVGGPGEDDVYEDDRADFRKSEPTTYINAPLVGVLAYLVGNPDPGQGHVRH</sequence>
<keyword id="KW-0119">Carbohydrate metabolism</keyword>
<keyword id="KW-0961">Cell wall biogenesis/degradation</keyword>
<keyword id="KW-0136">Cellulose degradation</keyword>
<keyword id="KW-0325">Glycoprotein</keyword>
<keyword id="KW-0326">Glycosidase</keyword>
<keyword id="KW-0378">Hydrolase</keyword>
<keyword id="KW-0624">Polysaccharide degradation</keyword>
<keyword id="KW-1185">Reference proteome</keyword>
<keyword id="KW-0964">Secreted</keyword>
<keyword id="KW-0732">Signal</keyword>
<name>GUN23_ORYSJ</name>
<gene>
    <name type="primary">GLU12</name>
    <name type="ordered locus">Os09g0530200</name>
    <name type="ordered locus">LOC_Os09g36060</name>
    <name type="ORF">OJ1531_B07.26</name>
</gene>
<proteinExistence type="evidence at transcript level"/>
<comment type="catalytic activity">
    <reaction>
        <text>Endohydrolysis of (1-&gt;4)-beta-D-glucosidic linkages in cellulose, lichenin and cereal beta-D-glucans.</text>
        <dbReference type="EC" id="3.2.1.4"/>
    </reaction>
</comment>
<comment type="subcellular location">
    <subcellularLocation>
        <location evidence="1">Secreted</location>
    </subcellularLocation>
</comment>
<comment type="similarity">
    <text evidence="5 6">Belongs to the glycosyl hydrolase 9 (cellulase E) family.</text>
</comment>
<feature type="signal peptide" evidence="2">
    <location>
        <begin position="1"/>
        <end position="29"/>
    </location>
</feature>
<feature type="chain" id="PRO_0000249300" description="Endoglucanase 23">
    <location>
        <begin position="30"/>
        <end position="515"/>
    </location>
</feature>
<feature type="active site" description="Nucleophile" evidence="5">
    <location>
        <position position="95"/>
    </location>
</feature>
<feature type="active site" evidence="3">
    <location>
        <position position="426"/>
    </location>
</feature>
<feature type="active site" evidence="4">
    <location>
        <position position="477"/>
    </location>
</feature>
<feature type="active site" evidence="4">
    <location>
        <position position="486"/>
    </location>
</feature>
<feature type="glycosylation site" description="N-linked (GlcNAc...) asparagine" evidence="2">
    <location>
        <position position="178"/>
    </location>
</feature>
<feature type="glycosylation site" description="N-linked (GlcNAc...) asparagine" evidence="2">
    <location>
        <position position="375"/>
    </location>
</feature>
<feature type="glycosylation site" description="N-linked (GlcNAc...) asparagine" evidence="2">
    <location>
        <position position="384"/>
    </location>
</feature>
<feature type="glycosylation site" description="N-linked (GlcNAc...) asparagine" evidence="2">
    <location>
        <position position="452"/>
    </location>
</feature>
<organism>
    <name type="scientific">Oryza sativa subsp. japonica</name>
    <name type="common">Rice</name>
    <dbReference type="NCBI Taxonomy" id="39947"/>
    <lineage>
        <taxon>Eukaryota</taxon>
        <taxon>Viridiplantae</taxon>
        <taxon>Streptophyta</taxon>
        <taxon>Embryophyta</taxon>
        <taxon>Tracheophyta</taxon>
        <taxon>Spermatophyta</taxon>
        <taxon>Magnoliopsida</taxon>
        <taxon>Liliopsida</taxon>
        <taxon>Poales</taxon>
        <taxon>Poaceae</taxon>
        <taxon>BOP clade</taxon>
        <taxon>Oryzoideae</taxon>
        <taxon>Oryzeae</taxon>
        <taxon>Oryzinae</taxon>
        <taxon>Oryza</taxon>
        <taxon>Oryza sativa</taxon>
    </lineage>
</organism>
<reference key="1">
    <citation type="journal article" date="2005" name="Nature">
        <title>The map-based sequence of the rice genome.</title>
        <authorList>
            <consortium name="International rice genome sequencing project (IRGSP)"/>
        </authorList>
    </citation>
    <scope>NUCLEOTIDE SEQUENCE [LARGE SCALE GENOMIC DNA]</scope>
    <source>
        <strain>cv. Nipponbare</strain>
    </source>
</reference>
<reference key="2">
    <citation type="journal article" date="2008" name="Nucleic Acids Res.">
        <title>The rice annotation project database (RAP-DB): 2008 update.</title>
        <authorList>
            <consortium name="The rice annotation project (RAP)"/>
        </authorList>
    </citation>
    <scope>GENOME REANNOTATION</scope>
    <source>
        <strain>cv. Nipponbare</strain>
    </source>
</reference>
<reference key="3">
    <citation type="journal article" date="2013" name="Rice">
        <title>Improvement of the Oryza sativa Nipponbare reference genome using next generation sequence and optical map data.</title>
        <authorList>
            <person name="Kawahara Y."/>
            <person name="de la Bastide M."/>
            <person name="Hamilton J.P."/>
            <person name="Kanamori H."/>
            <person name="McCombie W.R."/>
            <person name="Ouyang S."/>
            <person name="Schwartz D.C."/>
            <person name="Tanaka T."/>
            <person name="Wu J."/>
            <person name="Zhou S."/>
            <person name="Childs K.L."/>
            <person name="Davidson R.M."/>
            <person name="Lin H."/>
            <person name="Quesada-Ocampo L."/>
            <person name="Vaillancourt B."/>
            <person name="Sakai H."/>
            <person name="Lee S.S."/>
            <person name="Kim J."/>
            <person name="Numa H."/>
            <person name="Itoh T."/>
            <person name="Buell C.R."/>
            <person name="Matsumoto T."/>
        </authorList>
    </citation>
    <scope>GENOME REANNOTATION</scope>
    <source>
        <strain>cv. Nipponbare</strain>
    </source>
</reference>
<reference key="4">
    <citation type="journal article" date="2003" name="Science">
        <title>Collection, mapping, and annotation of over 28,000 cDNA clones from japonica rice.</title>
        <authorList>
            <consortium name="The rice full-length cDNA consortium"/>
        </authorList>
    </citation>
    <scope>NUCLEOTIDE SEQUENCE [LARGE SCALE MRNA]</scope>
    <source>
        <strain>cv. Nipponbare</strain>
    </source>
</reference>
<protein>
    <recommendedName>
        <fullName>Endoglucanase 23</fullName>
        <ecNumber>3.2.1.4</ecNumber>
    </recommendedName>
    <alternativeName>
        <fullName>Endo-1,4-beta glucanase 23</fullName>
    </alternativeName>
    <alternativeName>
        <fullName>OsGLU12</fullName>
    </alternativeName>
</protein>
<evidence type="ECO:0000250" key="1"/>
<evidence type="ECO:0000255" key="2"/>
<evidence type="ECO:0000255" key="3">
    <source>
        <dbReference type="PROSITE-ProRule" id="PRU10059"/>
    </source>
</evidence>
<evidence type="ECO:0000255" key="4">
    <source>
        <dbReference type="PROSITE-ProRule" id="PRU10060"/>
    </source>
</evidence>
<evidence type="ECO:0000255" key="5">
    <source>
        <dbReference type="PROSITE-ProRule" id="PRU10140"/>
    </source>
</evidence>
<evidence type="ECO:0000305" key="6"/>
<accession>Q69NF5</accession>
<accession>A0A0P0XPN9</accession>
<accession>Q0J054</accession>